<protein>
    <recommendedName>
        <fullName>Coagulation factor IX</fullName>
        <ecNumber evidence="1">3.4.21.22</ecNumber>
    </recommendedName>
    <alternativeName>
        <fullName>Christmas factor</fullName>
    </alternativeName>
</protein>
<dbReference type="EC" id="3.4.21.22" evidence="1"/>
<dbReference type="EMBL" id="M26233">
    <property type="protein sequence ID" value="AAA31520.1"/>
    <property type="molecule type" value="mRNA"/>
</dbReference>
<dbReference type="PIR" id="I47078">
    <property type="entry name" value="I47078"/>
</dbReference>
<dbReference type="SMR" id="P16291"/>
<dbReference type="STRING" id="9940.ENSOARP00000011335"/>
<dbReference type="MEROPS" id="S01.214"/>
<dbReference type="GlyCosmos" id="P16291">
    <property type="glycosylation" value="5 sites, No reported glycans"/>
</dbReference>
<dbReference type="PaxDb" id="9940-ENSOARP00000011335"/>
<dbReference type="eggNOG" id="ENOG502QUEV">
    <property type="taxonomic scope" value="Eukaryota"/>
</dbReference>
<dbReference type="Proteomes" id="UP000002356">
    <property type="component" value="Unplaced"/>
</dbReference>
<dbReference type="GO" id="GO:0005615">
    <property type="term" value="C:extracellular space"/>
    <property type="evidence" value="ECO:0000250"/>
    <property type="project" value="UniProtKB"/>
</dbReference>
<dbReference type="GO" id="GO:0005509">
    <property type="term" value="F:calcium ion binding"/>
    <property type="evidence" value="ECO:0000250"/>
    <property type="project" value="UniProtKB"/>
</dbReference>
<dbReference type="GO" id="GO:0004175">
    <property type="term" value="F:endopeptidase activity"/>
    <property type="evidence" value="ECO:0000250"/>
    <property type="project" value="UniProtKB"/>
</dbReference>
<dbReference type="GO" id="GO:0004252">
    <property type="term" value="F:serine-type endopeptidase activity"/>
    <property type="evidence" value="ECO:0007669"/>
    <property type="project" value="UniProtKB-EC"/>
</dbReference>
<dbReference type="GO" id="GO:0007596">
    <property type="term" value="P:blood coagulation"/>
    <property type="evidence" value="ECO:0000250"/>
    <property type="project" value="UniProtKB"/>
</dbReference>
<dbReference type="GO" id="GO:0006508">
    <property type="term" value="P:proteolysis"/>
    <property type="evidence" value="ECO:0000250"/>
    <property type="project" value="UniProtKB"/>
</dbReference>
<dbReference type="GO" id="GO:0031638">
    <property type="term" value="P:zymogen activation"/>
    <property type="evidence" value="ECO:0000250"/>
    <property type="project" value="UniProtKB"/>
</dbReference>
<dbReference type="CDD" id="cd00190">
    <property type="entry name" value="Tryp_SPc"/>
    <property type="match status" value="1"/>
</dbReference>
<dbReference type="FunFam" id="2.40.10.10:FF:000003">
    <property type="entry name" value="Transmembrane serine protease 3"/>
    <property type="match status" value="1"/>
</dbReference>
<dbReference type="Gene3D" id="2.40.10.10">
    <property type="entry name" value="Trypsin-like serine proteases"/>
    <property type="match status" value="2"/>
</dbReference>
<dbReference type="InterPro" id="IPR009003">
    <property type="entry name" value="Peptidase_S1_PA"/>
</dbReference>
<dbReference type="InterPro" id="IPR043504">
    <property type="entry name" value="Peptidase_S1_PA_chymotrypsin"/>
</dbReference>
<dbReference type="InterPro" id="IPR001314">
    <property type="entry name" value="Peptidase_S1A"/>
</dbReference>
<dbReference type="InterPro" id="IPR050127">
    <property type="entry name" value="Serine_Proteases_S1"/>
</dbReference>
<dbReference type="InterPro" id="IPR001254">
    <property type="entry name" value="Trypsin_dom"/>
</dbReference>
<dbReference type="InterPro" id="IPR018114">
    <property type="entry name" value="TRYPSIN_HIS"/>
</dbReference>
<dbReference type="InterPro" id="IPR033116">
    <property type="entry name" value="TRYPSIN_SER"/>
</dbReference>
<dbReference type="PANTHER" id="PTHR24264:SF65">
    <property type="entry name" value="SRCR DOMAIN-CONTAINING PROTEIN"/>
    <property type="match status" value="1"/>
</dbReference>
<dbReference type="PANTHER" id="PTHR24264">
    <property type="entry name" value="TRYPSIN-RELATED"/>
    <property type="match status" value="1"/>
</dbReference>
<dbReference type="Pfam" id="PF00089">
    <property type="entry name" value="Trypsin"/>
    <property type="match status" value="1"/>
</dbReference>
<dbReference type="PRINTS" id="PR00722">
    <property type="entry name" value="CHYMOTRYPSIN"/>
</dbReference>
<dbReference type="SMART" id="SM00020">
    <property type="entry name" value="Tryp_SPc"/>
    <property type="match status" value="1"/>
</dbReference>
<dbReference type="SUPFAM" id="SSF50494">
    <property type="entry name" value="Trypsin-like serine proteases"/>
    <property type="match status" value="1"/>
</dbReference>
<dbReference type="PROSITE" id="PS50240">
    <property type="entry name" value="TRYPSIN_DOM"/>
    <property type="match status" value="1"/>
</dbReference>
<dbReference type="PROSITE" id="PS00134">
    <property type="entry name" value="TRYPSIN_HIS"/>
    <property type="match status" value="1"/>
</dbReference>
<dbReference type="PROSITE" id="PS00135">
    <property type="entry name" value="TRYPSIN_SER"/>
    <property type="match status" value="1"/>
</dbReference>
<keyword id="KW-0094">Blood coagulation</keyword>
<keyword id="KW-0106">Calcium</keyword>
<keyword id="KW-1015">Disulfide bond</keyword>
<keyword id="KW-0325">Glycoprotein</keyword>
<keyword id="KW-0356">Hemostasis</keyword>
<keyword id="KW-0378">Hydrolase</keyword>
<keyword id="KW-0479">Metal-binding</keyword>
<keyword id="KW-0597">Phosphoprotein</keyword>
<keyword id="KW-0645">Protease</keyword>
<keyword id="KW-1185">Reference proteome</keyword>
<keyword id="KW-0964">Secreted</keyword>
<keyword id="KW-0720">Serine protease</keyword>
<keyword id="KW-0765">Sulfation</keyword>
<proteinExistence type="evidence at transcript level"/>
<evidence type="ECO:0000250" key="1">
    <source>
        <dbReference type="UniProtKB" id="P00740"/>
    </source>
</evidence>
<evidence type="ECO:0000255" key="2"/>
<evidence type="ECO:0000255" key="3">
    <source>
        <dbReference type="PROSITE-ProRule" id="PRU00274"/>
    </source>
</evidence>
<gene>
    <name type="primary">F9</name>
</gene>
<sequence length="274" mass="30595">RASVLHTSKKLTRAETIFSNMNYENSSEAEIIWDNVTQSNQSFDDFNRVVGGEDAARGQFPWQVLLHGEIAAFCGGSIVNEKWVVTAAHCIKPGVKITVVAGEHNTEKPEPTEQKRNVIRAIPYHGYNASINKYSHDIALLELDEPLELNSYVTPICIADREYTNIFLKFGYGYVSGWGRVFNRGRSASILQYLKVPLVDRATCLRSTKFTIYNHMFCAGYHEGGKDSCQGDSGGPHVTEVEGTSFLTGIISWGEECAMKGKYGIYTKVSRYEV</sequence>
<accession>P16291</accession>
<reference key="1">
    <citation type="journal article" date="1990" name="Genomics">
        <title>Direct sequencing of the activation peptide and the catalytic domain of the factor IX gene in six species.</title>
        <authorList>
            <person name="Sarkar G."/>
            <person name="Koeberl D.D."/>
            <person name="Sommer S.S."/>
        </authorList>
    </citation>
    <scope>NUCLEOTIDE SEQUENCE [MRNA]</scope>
</reference>
<name>FA9_SHEEP</name>
<organism>
    <name type="scientific">Ovis aries</name>
    <name type="common">Sheep</name>
    <dbReference type="NCBI Taxonomy" id="9940"/>
    <lineage>
        <taxon>Eukaryota</taxon>
        <taxon>Metazoa</taxon>
        <taxon>Chordata</taxon>
        <taxon>Craniata</taxon>
        <taxon>Vertebrata</taxon>
        <taxon>Euteleostomi</taxon>
        <taxon>Mammalia</taxon>
        <taxon>Eutheria</taxon>
        <taxon>Laurasiatheria</taxon>
        <taxon>Artiodactyla</taxon>
        <taxon>Ruminantia</taxon>
        <taxon>Pecora</taxon>
        <taxon>Bovidae</taxon>
        <taxon>Caprinae</taxon>
        <taxon>Ovis</taxon>
    </lineage>
</organism>
<comment type="function">
    <text evidence="1">Factor IX is a vitamin K-dependent plasma protein that participates in the intrinsic pathway of blood coagulation by converting factor X to its active form in the presence of Ca(2+) ions, phospholipids, and factor VIIIa.</text>
</comment>
<comment type="catalytic activity">
    <reaction evidence="1">
        <text>Selective cleavage of Arg-|-Ile bond in factor X to form factor Xa.</text>
        <dbReference type="EC" id="3.4.21.22"/>
    </reaction>
</comment>
<comment type="subunit">
    <text evidence="1">Heterodimer of a light chain and a heavy chain; disulfide-linked. Interacts (inactive and activated) with F11 (activated) in calcium-dependent manner. Interacts with SERPINC1.</text>
</comment>
<comment type="subcellular location">
    <subcellularLocation>
        <location evidence="1">Secreted</location>
    </subcellularLocation>
</comment>
<comment type="PTM">
    <text evidence="1">Activated by factor XIa, which excises the activation peptide. The propeptide can also be removed by snake venom protease (By similarity). Activated by coagulation factor VIIa-tissue factor (F7-F3) complex in calcium-dependent manner (By similarity).</text>
</comment>
<comment type="similarity">
    <text evidence="3">Belongs to the peptidase S1 family.</text>
</comment>
<feature type="chain" id="PRO_0000088686" description="Coagulation factor IX">
    <location>
        <begin position="1" status="less than"/>
        <end position="274" status="greater than"/>
    </location>
</feature>
<feature type="domain" description="Peptidase S1" evidence="3">
    <location>
        <begin position="49"/>
        <end position="274" status="greater than"/>
    </location>
</feature>
<feature type="active site" description="Charge relay system" evidence="1">
    <location>
        <position position="89"/>
    </location>
</feature>
<feature type="active site" description="Charge relay system" evidence="1">
    <location>
        <position position="137"/>
    </location>
</feature>
<feature type="active site" description="Charge relay system" evidence="1">
    <location>
        <position position="233"/>
    </location>
</feature>
<feature type="binding site" evidence="1">
    <location>
        <position position="103"/>
    </location>
    <ligand>
        <name>Ca(2+)</name>
        <dbReference type="ChEBI" id="CHEBI:29108"/>
    </ligand>
</feature>
<feature type="binding site" evidence="1">
    <location>
        <position position="105"/>
    </location>
    <ligand>
        <name>Ca(2+)</name>
        <dbReference type="ChEBI" id="CHEBI:29108"/>
    </ligand>
</feature>
<feature type="binding site" evidence="1">
    <location>
        <position position="110"/>
    </location>
    <ligand>
        <name>Ca(2+)</name>
        <dbReference type="ChEBI" id="CHEBI:29108"/>
    </ligand>
</feature>
<feature type="binding site" evidence="1">
    <location>
        <position position="113"/>
    </location>
    <ligand>
        <name>Ca(2+)</name>
        <dbReference type="ChEBI" id="CHEBI:29108"/>
    </ligand>
</feature>
<feature type="site" description="Cleavage; by factor XIa" evidence="1">
    <location>
        <begin position="13"/>
        <end position="14"/>
    </location>
</feature>
<feature type="site" description="Cleavage; by factor XIa" evidence="1">
    <location>
        <begin position="48"/>
        <end position="49"/>
    </location>
</feature>
<feature type="modified residue" description="Sulfotyrosine" evidence="1">
    <location>
        <position position="23"/>
    </location>
</feature>
<feature type="modified residue" description="Phosphoserine" evidence="1">
    <location>
        <position position="26"/>
    </location>
</feature>
<feature type="glycosylation site" description="N-linked (GlcNAc...) asparagine" evidence="2">
    <location>
        <position position="25"/>
    </location>
</feature>
<feature type="glycosylation site" description="N-linked (GlcNAc...) asparagine" evidence="2">
    <location>
        <position position="35"/>
    </location>
</feature>
<feature type="glycosylation site" description="O-linked (GalNAc...) threonine" evidence="1">
    <location>
        <position position="37"/>
    </location>
</feature>
<feature type="glycosylation site" description="N-linked (GlcNAc...) asparagine" evidence="2">
    <location>
        <position position="40"/>
    </location>
</feature>
<feature type="glycosylation site" description="N-linked (GlcNAc...) asparagine" evidence="2">
    <location>
        <position position="128"/>
    </location>
</feature>
<feature type="disulfide bond" evidence="1">
    <location>
        <begin position="74"/>
        <end position="90"/>
    </location>
</feature>
<feature type="disulfide bond" evidence="1">
    <location>
        <begin position="204"/>
        <end position="218"/>
    </location>
</feature>
<feature type="disulfide bond" evidence="1">
    <location>
        <begin position="229"/>
        <end position="257"/>
    </location>
</feature>
<feature type="non-terminal residue">
    <location>
        <position position="1"/>
    </location>
</feature>
<feature type="non-terminal residue">
    <location>
        <position position="274"/>
    </location>
</feature>